<dbReference type="EC" id="2.3.2.-" evidence="2"/>
<dbReference type="EMBL" id="AF175224">
    <property type="protein sequence ID" value="AAG09182.1"/>
    <property type="molecule type" value="mRNA"/>
</dbReference>
<dbReference type="EMBL" id="BC078743">
    <property type="protein sequence ID" value="AAH78743.1"/>
    <property type="molecule type" value="mRNA"/>
</dbReference>
<dbReference type="RefSeq" id="NP_599221.2">
    <property type="nucleotide sequence ID" value="NM_134394.3"/>
</dbReference>
<dbReference type="SMR" id="Q6AZ50"/>
<dbReference type="BioGRID" id="251241">
    <property type="interactions" value="1"/>
</dbReference>
<dbReference type="FunCoup" id="Q6AZ50">
    <property type="interactions" value="4442"/>
</dbReference>
<dbReference type="STRING" id="10116.ENSRNOP00000002906"/>
<dbReference type="PhosphoSitePlus" id="Q6AZ50"/>
<dbReference type="jPOST" id="Q6AZ50"/>
<dbReference type="PaxDb" id="10116-ENSRNOP00000002906"/>
<dbReference type="Ensembl" id="ENSRNOT00000002906.7">
    <property type="protein sequence ID" value="ENSRNOP00000002906.3"/>
    <property type="gene ID" value="ENSRNOG00000002094.7"/>
</dbReference>
<dbReference type="GeneID" id="171415"/>
<dbReference type="KEGG" id="rno:171415"/>
<dbReference type="UCSC" id="RGD:708464">
    <property type="organism name" value="rat"/>
</dbReference>
<dbReference type="AGR" id="RGD:708464"/>
<dbReference type="CTD" id="64422"/>
<dbReference type="RGD" id="708464">
    <property type="gene designation" value="Atg3"/>
</dbReference>
<dbReference type="eggNOG" id="KOG2981">
    <property type="taxonomic scope" value="Eukaryota"/>
</dbReference>
<dbReference type="GeneTree" id="ENSGT00390000010308"/>
<dbReference type="HOGENOM" id="CLU_027518_0_0_1"/>
<dbReference type="InParanoid" id="Q6AZ50"/>
<dbReference type="PhylomeDB" id="Q6AZ50"/>
<dbReference type="TreeFam" id="TF105903"/>
<dbReference type="Reactome" id="R-RNO-1632852">
    <property type="pathway name" value="Macroautophagy"/>
</dbReference>
<dbReference type="PRO" id="PR:Q6AZ50"/>
<dbReference type="Proteomes" id="UP000002494">
    <property type="component" value="Chromosome 11"/>
</dbReference>
<dbReference type="Bgee" id="ENSRNOG00000002094">
    <property type="expression patterns" value="Expressed in cerebellum and 20 other cell types or tissues"/>
</dbReference>
<dbReference type="GO" id="GO:0034274">
    <property type="term" value="C:Atg12-Atg5-Atg16 complex"/>
    <property type="evidence" value="ECO:0000266"/>
    <property type="project" value="RGD"/>
</dbReference>
<dbReference type="GO" id="GO:0005737">
    <property type="term" value="C:cytoplasm"/>
    <property type="evidence" value="ECO:0000266"/>
    <property type="project" value="RGD"/>
</dbReference>
<dbReference type="GO" id="GO:0005829">
    <property type="term" value="C:cytosol"/>
    <property type="evidence" value="ECO:0000266"/>
    <property type="project" value="RGD"/>
</dbReference>
<dbReference type="GO" id="GO:0000407">
    <property type="term" value="C:phagophore assembly site"/>
    <property type="evidence" value="ECO:0000318"/>
    <property type="project" value="GO_Central"/>
</dbReference>
<dbReference type="GO" id="GO:0019777">
    <property type="term" value="F:Atg12 transferase activity"/>
    <property type="evidence" value="ECO:0000250"/>
    <property type="project" value="UniProtKB"/>
</dbReference>
<dbReference type="GO" id="GO:0141046">
    <property type="term" value="F:Atg8-family conjugating enzyme activity"/>
    <property type="evidence" value="ECO:0000315"/>
    <property type="project" value="UniProtKB"/>
</dbReference>
<dbReference type="GO" id="GO:0019776">
    <property type="term" value="F:Atg8-family ligase activity"/>
    <property type="evidence" value="ECO:0000250"/>
    <property type="project" value="UniProtKB"/>
</dbReference>
<dbReference type="GO" id="GO:0019899">
    <property type="term" value="F:enzyme binding"/>
    <property type="evidence" value="ECO:0000266"/>
    <property type="project" value="RGD"/>
</dbReference>
<dbReference type="GO" id="GO:0019787">
    <property type="term" value="F:ubiquitin-like protein transferase activity"/>
    <property type="evidence" value="ECO:0000266"/>
    <property type="project" value="RGD"/>
</dbReference>
<dbReference type="GO" id="GO:0000045">
    <property type="term" value="P:autophagosome assembly"/>
    <property type="evidence" value="ECO:0000250"/>
    <property type="project" value="UniProtKB"/>
</dbReference>
<dbReference type="GO" id="GO:0006914">
    <property type="term" value="P:autophagy"/>
    <property type="evidence" value="ECO:0000270"/>
    <property type="project" value="RGD"/>
</dbReference>
<dbReference type="GO" id="GO:0000422">
    <property type="term" value="P:autophagy of mitochondrion"/>
    <property type="evidence" value="ECO:0000318"/>
    <property type="project" value="GO_Central"/>
</dbReference>
<dbReference type="GO" id="GO:0061723">
    <property type="term" value="P:glycophagy"/>
    <property type="evidence" value="ECO:0000318"/>
    <property type="project" value="GO_Central"/>
</dbReference>
<dbReference type="GO" id="GO:0016236">
    <property type="term" value="P:macroautophagy"/>
    <property type="evidence" value="ECO:0000266"/>
    <property type="project" value="RGD"/>
</dbReference>
<dbReference type="GO" id="GO:0043653">
    <property type="term" value="P:mitochondrial fragmentation involved in apoptotic process"/>
    <property type="evidence" value="ECO:0000250"/>
    <property type="project" value="UniProtKB"/>
</dbReference>
<dbReference type="GO" id="GO:0050765">
    <property type="term" value="P:negative regulation of phagocytosis"/>
    <property type="evidence" value="ECO:0000266"/>
    <property type="project" value="RGD"/>
</dbReference>
<dbReference type="GO" id="GO:0044804">
    <property type="term" value="P:nucleophagy"/>
    <property type="evidence" value="ECO:0000318"/>
    <property type="project" value="GO_Central"/>
</dbReference>
<dbReference type="GO" id="GO:0015031">
    <property type="term" value="P:protein transport"/>
    <property type="evidence" value="ECO:0007669"/>
    <property type="project" value="UniProtKB-KW"/>
</dbReference>
<dbReference type="GO" id="GO:0016567">
    <property type="term" value="P:protein ubiquitination"/>
    <property type="evidence" value="ECO:0000266"/>
    <property type="project" value="RGD"/>
</dbReference>
<dbReference type="GO" id="GO:1902017">
    <property type="term" value="P:regulation of cilium assembly"/>
    <property type="evidence" value="ECO:0000266"/>
    <property type="project" value="RGD"/>
</dbReference>
<dbReference type="FunFam" id="3.30.1460.50:FF:000001">
    <property type="entry name" value="Autophagy-related protein 3"/>
    <property type="match status" value="1"/>
</dbReference>
<dbReference type="Gene3D" id="3.30.1460.50">
    <property type="match status" value="1"/>
</dbReference>
<dbReference type="InterPro" id="IPR007135">
    <property type="entry name" value="Atg3/Atg10"/>
</dbReference>
<dbReference type="PANTHER" id="PTHR12866">
    <property type="entry name" value="UBIQUITIN-LIKE-CONJUGATING ENZYME ATG3"/>
    <property type="match status" value="1"/>
</dbReference>
<dbReference type="PANTHER" id="PTHR12866:SF2">
    <property type="entry name" value="UBIQUITIN-LIKE-CONJUGATING ENZYME ATG3"/>
    <property type="match status" value="1"/>
</dbReference>
<dbReference type="Pfam" id="PF03987">
    <property type="entry name" value="Autophagy_act_C"/>
    <property type="match status" value="1"/>
</dbReference>
<accession>Q6AZ50</accession>
<accession>Q9ESH2</accession>
<name>ATG3_RAT</name>
<proteinExistence type="evidence at transcript level"/>
<comment type="function">
    <text evidence="1 2">E2 conjugating enzyme that catalyzes the covalent conjugation of the C-terminal Gly of ATG8-like proteins (GABARAP, GABARAPL1, GABARAPL2 or MAP1LC3A) to the amino group of phosphatidylethanolamine (PE)-containing lipids in the membrane resulting in membrane-bound ATG8-like proteins which is one of the key steps in the development of autophagic isolation membranes during autophagosome formation. Cycles back and forth between binding to ATG7 for loading with the ATG8-like proteins and binding to E3 enzyme, composed of ATG12, ATG5 and ATG16L1 to promote ATG8-like proteins lipidation (By similarity). Also plays a role as a membrane curvature sensor that facilitates LC3/GABARAP lipidation by sensing local membrane stress associated with lipid-packing defects as occurs with high molar proportions of conical lipids or strident membrane curvature (By similarity). Interacts with negatively-charged membranes promoting membrane tethering and enhancing LC3/GABARAP lipidation (By similarity). Also acts as an autocatalytic E2-like enzyme by catalyzing the conjugation of ATG12 to itself in an ATG7-dependent manner, this complex thus formed, plays a role in mitochondrial homeostasis but not in autophagy. ATG12-ATG3 conjugation promotes late endosome to lysosome trafficking and basal autophagosome maturation via its interaction with PDCD6IP. ATG12-ATG3 conjugate is also formed upon viccina virus infection, leading to the disruption the cellular autophagy which is not necessary for vaccinia survival and proliferation. Promotes primary ciliogenesis by removing OFD1 from centriolar satellites via the autophagic pathway (By similarity).</text>
</comment>
<comment type="subunit">
    <text evidence="1 2">Homdimer. Interacts with ATG7; this interaction forms an E1-E2 complex that is essential for the transfer of GABARAP thioester from ATG7 to ATG3 and disrupts interaction with the E3 enzyme complex. Interacts with ATG12; this interaction is ATG7-dependent, essential for phosphatidylethanolamine (PE)-conjugated ATG8-like proteins formation and also mediates the autoconjugation of ATG12 on ATG3. Interacts with FNBP1L. Interacts with the E3 enzyme complex composed of 4 sets of ATG12-ATG5 and ATG16L1 (400 kDa); this interaction disrupts interaction with ATG7 and promotes ATG8-like proteins lipidation. Interacts with GABARAP and MAP1LC3A. Interacts with the ATG12-ATG5 conjugate; this interaction inhibits ATG8-like proteins lipidation (By similarity). Interacts (ATG12-ATG3 conjugate form) with PDCD6IP (via the BRO1 domain); this interaction is bridged by ATG12 and promotes multiple PDCD6IP-mediated functions such as endolysosomal trafficking, macroautophagy and exosome biogenesis (By similarity).</text>
</comment>
<comment type="subcellular location">
    <subcellularLocation>
        <location evidence="2">Cytoplasm</location>
    </subcellularLocation>
</comment>
<comment type="domain">
    <text evidence="1">The membrane-curvature-sensing motif targets curved membranes.</text>
</comment>
<comment type="domain">
    <text evidence="2">The N-terminal region works in concert with its geometry-selective amphipathic helix (AH) to promote LC3-PE conjugation activity only on the target membrane.</text>
</comment>
<comment type="domain">
    <text evidence="2">The LC3 interacting regions (LIR) motif mediates interaction with GABARAP and MAP1LC3A in a beta-sheet conformation-dependent manner. The LIR motif is required for LC3 lipidation and ATG3~LC3 thioester formation.</text>
</comment>
<comment type="PTM">
    <text evidence="1">Conjugated to ATG12 at Lys-243. ATG12-conjugation plays a role in regulation of mitochondrial homeostasis and cell death, while it is not involved in PE-conjugation to ATG8-like proteins and autophagy.</text>
</comment>
<comment type="PTM">
    <text evidence="2">Cleaved by CASP8 upon death ligand binding such as tumor necrosis factor-alpha. CASP8 cleavage blocks survival-related autophagy and favors apoptosis.</text>
</comment>
<comment type="similarity">
    <text evidence="4">Belongs to the ATG3 family.</text>
</comment>
<evidence type="ECO:0000250" key="1">
    <source>
        <dbReference type="UniProtKB" id="Q9CPX6"/>
    </source>
</evidence>
<evidence type="ECO:0000250" key="2">
    <source>
        <dbReference type="UniProtKB" id="Q9NT62"/>
    </source>
</evidence>
<evidence type="ECO:0000303" key="3">
    <source ref="1"/>
</evidence>
<evidence type="ECO:0000305" key="4"/>
<evidence type="ECO:0000312" key="5">
    <source>
        <dbReference type="RGD" id="708464"/>
    </source>
</evidence>
<keyword id="KW-0007">Acetylation</keyword>
<keyword id="KW-0072">Autophagy</keyword>
<keyword id="KW-0963">Cytoplasm</keyword>
<keyword id="KW-1017">Isopeptide bond</keyword>
<keyword id="KW-0653">Protein transport</keyword>
<keyword id="KW-1185">Reference proteome</keyword>
<keyword id="KW-0808">Transferase</keyword>
<keyword id="KW-0813">Transport</keyword>
<keyword id="KW-0832">Ubl conjugation</keyword>
<keyword id="KW-0833">Ubl conjugation pathway</keyword>
<reference key="1">
    <citation type="submission" date="1999-08" db="EMBL/GenBank/DDBJ databases">
        <title>Identification and characterization of a novel gene induced by ischemic preconditioning in the retina.</title>
        <authorList>
            <person name="Laser M."/>
            <person name="Li Y."/>
            <person name="Xu L."/>
            <person name="Darden A."/>
            <person name="Wu B.X."/>
            <person name="Hazard E.S. III"/>
            <person name="Crosson C."/>
            <person name="Ma J.X."/>
        </authorList>
    </citation>
    <scope>NUCLEOTIDE SEQUENCE [MRNA]</scope>
</reference>
<reference key="2">
    <citation type="journal article" date="2004" name="Genome Res.">
        <title>The status, quality, and expansion of the NIH full-length cDNA project: the Mammalian Gene Collection (MGC).</title>
        <authorList>
            <consortium name="The MGC Project Team"/>
        </authorList>
    </citation>
    <scope>NUCLEOTIDE SEQUENCE [LARGE SCALE MRNA]</scope>
    <source>
        <tissue>Testis</tissue>
    </source>
</reference>
<protein>
    <recommendedName>
        <fullName evidence="4">Ubiquitin-like-conjugating enzyme ATG3</fullName>
        <ecNumber evidence="2">2.3.2.-</ecNumber>
    </recommendedName>
    <alternativeName>
        <fullName>Autophagy-related protein 3</fullName>
        <shortName>APG3-like</shortName>
    </alternativeName>
    <alternativeName>
        <fullName evidence="3">Preconditioning-inducible gene 1 protein</fullName>
    </alternativeName>
</protein>
<sequence length="314" mass="35822">MQNVINTVKGKALEVAEYLTPVLKESKFKETGVITPEEFVAAGDHLVHHCPTWQWATGEELKVKAYLPTGKQFLVTKNVPCYKRCKQMEYSDELEAIIEEDDGDGGWVDTYHNTGITGITEAVKEITLESKDSIKLQDCSVLCDEEEEEEEGEAADMEEYEESGLLETDEATLDTRRIVEACKAKADAGGEDAILQTRTYDLYITYDKYYQTPRLWLFGYDEQRQPLTVEHMYEDISQDHVKKTVTIENHPHLPPPPMCSVHPCRHAEVMKKIIETVAEGGGELGVHMYLLIFLKFVQAVIPTIEYDYTRHFTM</sequence>
<feature type="chain" id="PRO_0000213571" description="Ubiquitin-like-conjugating enzyme ATG3">
    <location>
        <begin position="1"/>
        <end position="314"/>
    </location>
</feature>
<feature type="region of interest" description="Interaction with ATG12" evidence="2">
    <location>
        <begin position="140"/>
        <end position="170"/>
    </location>
</feature>
<feature type="short sequence motif" description="Membrane-curvature-sensing motif" evidence="1">
    <location>
        <begin position="4"/>
        <end position="19"/>
    </location>
</feature>
<feature type="short sequence motif" description="Increases ATG3 translation efficiency by the ribomome assisted of EIF5A" evidence="1">
    <location>
        <begin position="101"/>
        <end position="103"/>
    </location>
</feature>
<feature type="short sequence motif" description="LIR motif" evidence="2">
    <location>
        <begin position="104"/>
        <end position="110"/>
    </location>
</feature>
<feature type="short sequence motif" description="Caspase cleavage motif LETD" evidence="2">
    <location>
        <begin position="166"/>
        <end position="169"/>
    </location>
</feature>
<feature type="active site" description="Glycyl thioester intermediate" evidence="2">
    <location>
        <position position="264"/>
    </location>
</feature>
<feature type="site" description="Cleavage; by CASP8" evidence="2">
    <location>
        <begin position="169"/>
        <end position="170"/>
    </location>
</feature>
<feature type="modified residue" description="N-acetylmethionine" evidence="2">
    <location>
        <position position="1"/>
    </location>
</feature>
<feature type="cross-link" description="Glycyl lysine isopeptide (Lys-Gly) (interchain with G-Cter in ATG12)" evidence="1">
    <location>
        <position position="243"/>
    </location>
</feature>
<feature type="sequence conflict" description="In Ref. 1; AAG09182." evidence="4" ref="1">
    <original>P</original>
    <variation>L</variation>
    <location>
        <position position="257"/>
    </location>
</feature>
<organism>
    <name type="scientific">Rattus norvegicus</name>
    <name type="common">Rat</name>
    <dbReference type="NCBI Taxonomy" id="10116"/>
    <lineage>
        <taxon>Eukaryota</taxon>
        <taxon>Metazoa</taxon>
        <taxon>Chordata</taxon>
        <taxon>Craniata</taxon>
        <taxon>Vertebrata</taxon>
        <taxon>Euteleostomi</taxon>
        <taxon>Mammalia</taxon>
        <taxon>Eutheria</taxon>
        <taxon>Euarchontoglires</taxon>
        <taxon>Glires</taxon>
        <taxon>Rodentia</taxon>
        <taxon>Myomorpha</taxon>
        <taxon>Muroidea</taxon>
        <taxon>Muridae</taxon>
        <taxon>Murinae</taxon>
        <taxon>Rattus</taxon>
    </lineage>
</organism>
<gene>
    <name evidence="5" type="primary">Atg3</name>
    <name type="synonym">Apg3l</name>
</gene>